<organism>
    <name type="scientific">Hamiltonella defensa subsp. Acyrthosiphon pisum (strain 5AT)</name>
    <dbReference type="NCBI Taxonomy" id="572265"/>
    <lineage>
        <taxon>Bacteria</taxon>
        <taxon>Pseudomonadati</taxon>
        <taxon>Pseudomonadota</taxon>
        <taxon>Gammaproteobacteria</taxon>
        <taxon>Enterobacterales</taxon>
        <taxon>Enterobacteriaceae</taxon>
        <taxon>aphid secondary symbionts</taxon>
        <taxon>Candidatus Hamiltonella</taxon>
    </lineage>
</organism>
<comment type="function">
    <text evidence="1">Forms part of the ribosomal stalk which helps the ribosome interact with GTP-bound translation factors. Is thus essential for accurate translation.</text>
</comment>
<comment type="subunit">
    <text evidence="1">Homodimer. Part of the ribosomal stalk of the 50S ribosomal subunit. Forms a multimeric L10(L12)X complex, where L10 forms an elongated spine to which 2 to 4 L12 dimers bind in a sequential fashion. Binds GTP-bound translation factors.</text>
</comment>
<comment type="similarity">
    <text evidence="1">Belongs to the bacterial ribosomal protein bL12 family.</text>
</comment>
<protein>
    <recommendedName>
        <fullName evidence="1">Large ribosomal subunit protein bL12</fullName>
    </recommendedName>
    <alternativeName>
        <fullName evidence="2">50S ribosomal protein L7/L12</fullName>
    </alternativeName>
</protein>
<dbReference type="EMBL" id="CP001277">
    <property type="protein sequence ID" value="ACQ67445.1"/>
    <property type="molecule type" value="Genomic_DNA"/>
</dbReference>
<dbReference type="RefSeq" id="WP_015873266.1">
    <property type="nucleotide sequence ID" value="NC_012751.1"/>
</dbReference>
<dbReference type="SMR" id="C4K4F2"/>
<dbReference type="STRING" id="572265.HDEF_0712"/>
<dbReference type="GeneID" id="66260565"/>
<dbReference type="KEGG" id="hde:HDEF_0712"/>
<dbReference type="eggNOG" id="COG0222">
    <property type="taxonomic scope" value="Bacteria"/>
</dbReference>
<dbReference type="HOGENOM" id="CLU_086499_3_2_6"/>
<dbReference type="Proteomes" id="UP000002334">
    <property type="component" value="Chromosome"/>
</dbReference>
<dbReference type="GO" id="GO:0022625">
    <property type="term" value="C:cytosolic large ribosomal subunit"/>
    <property type="evidence" value="ECO:0007669"/>
    <property type="project" value="TreeGrafter"/>
</dbReference>
<dbReference type="GO" id="GO:0003729">
    <property type="term" value="F:mRNA binding"/>
    <property type="evidence" value="ECO:0007669"/>
    <property type="project" value="TreeGrafter"/>
</dbReference>
<dbReference type="GO" id="GO:0003735">
    <property type="term" value="F:structural constituent of ribosome"/>
    <property type="evidence" value="ECO:0007669"/>
    <property type="project" value="InterPro"/>
</dbReference>
<dbReference type="GO" id="GO:0006412">
    <property type="term" value="P:translation"/>
    <property type="evidence" value="ECO:0007669"/>
    <property type="project" value="UniProtKB-UniRule"/>
</dbReference>
<dbReference type="CDD" id="cd00387">
    <property type="entry name" value="Ribosomal_L7_L12"/>
    <property type="match status" value="1"/>
</dbReference>
<dbReference type="FunFam" id="3.30.1390.10:FF:000001">
    <property type="entry name" value="50S ribosomal protein L7/L12"/>
    <property type="match status" value="1"/>
</dbReference>
<dbReference type="Gene3D" id="3.30.1390.10">
    <property type="match status" value="1"/>
</dbReference>
<dbReference type="Gene3D" id="1.20.5.710">
    <property type="entry name" value="Single helix bin"/>
    <property type="match status" value="1"/>
</dbReference>
<dbReference type="HAMAP" id="MF_00368">
    <property type="entry name" value="Ribosomal_bL12"/>
    <property type="match status" value="1"/>
</dbReference>
<dbReference type="InterPro" id="IPR000206">
    <property type="entry name" value="Ribosomal_bL12"/>
</dbReference>
<dbReference type="InterPro" id="IPR013823">
    <property type="entry name" value="Ribosomal_bL12_C"/>
</dbReference>
<dbReference type="InterPro" id="IPR014719">
    <property type="entry name" value="Ribosomal_bL12_C/ClpS-like"/>
</dbReference>
<dbReference type="InterPro" id="IPR008932">
    <property type="entry name" value="Ribosomal_bL12_oligo"/>
</dbReference>
<dbReference type="InterPro" id="IPR036235">
    <property type="entry name" value="Ribosomal_bL12_oligo_N_sf"/>
</dbReference>
<dbReference type="NCBIfam" id="TIGR00855">
    <property type="entry name" value="L12"/>
    <property type="match status" value="1"/>
</dbReference>
<dbReference type="PANTHER" id="PTHR45987">
    <property type="entry name" value="39S RIBOSOMAL PROTEIN L12"/>
    <property type="match status" value="1"/>
</dbReference>
<dbReference type="PANTHER" id="PTHR45987:SF4">
    <property type="entry name" value="LARGE RIBOSOMAL SUBUNIT PROTEIN BL12M"/>
    <property type="match status" value="1"/>
</dbReference>
<dbReference type="Pfam" id="PF00542">
    <property type="entry name" value="Ribosomal_L12"/>
    <property type="match status" value="1"/>
</dbReference>
<dbReference type="Pfam" id="PF16320">
    <property type="entry name" value="Ribosomal_L12_N"/>
    <property type="match status" value="1"/>
</dbReference>
<dbReference type="SUPFAM" id="SSF54736">
    <property type="entry name" value="ClpS-like"/>
    <property type="match status" value="1"/>
</dbReference>
<dbReference type="SUPFAM" id="SSF48300">
    <property type="entry name" value="Ribosomal protein L7/12, oligomerisation (N-terminal) domain"/>
    <property type="match status" value="1"/>
</dbReference>
<proteinExistence type="inferred from homology"/>
<feature type="chain" id="PRO_1000205561" description="Large ribosomal subunit protein bL12">
    <location>
        <begin position="1"/>
        <end position="124"/>
    </location>
</feature>
<reference key="1">
    <citation type="journal article" date="2009" name="Proc. Natl. Acad. Sci. U.S.A.">
        <title>Hamiltonella defensa, genome evolution of protective bacterial endosymbiont from pathogenic ancestors.</title>
        <authorList>
            <person name="Degnan P.H."/>
            <person name="Yu Y."/>
            <person name="Sisneros N."/>
            <person name="Wing R.A."/>
            <person name="Moran N.A."/>
        </authorList>
    </citation>
    <scope>NUCLEOTIDE SEQUENCE [LARGE SCALE GENOMIC DNA]</scope>
    <source>
        <strain>5AT</strain>
    </source>
</reference>
<keyword id="KW-0687">Ribonucleoprotein</keyword>
<keyword id="KW-0689">Ribosomal protein</keyword>
<name>RL7_HAMD5</name>
<evidence type="ECO:0000255" key="1">
    <source>
        <dbReference type="HAMAP-Rule" id="MF_00368"/>
    </source>
</evidence>
<evidence type="ECO:0000305" key="2"/>
<gene>
    <name evidence="1" type="primary">rplL</name>
    <name type="ordered locus">HDEF_0712</name>
</gene>
<accession>C4K4F2</accession>
<sequence length="124" mass="13184">MSIDQKKLVDITNSIREMTITNVLDLISIMEKEFGVSAAAAVAVAAAPAEAVEEKTEFDVILKSFGENKVAVIKAVRGATGLGLKEAKELVEAAPKNVKEGINKEEAESLKKTLEEAGADVDIK</sequence>